<sequence length="97" mass="10679">MTSLLTTPSPREELMTTPILQPTEALSPEDGASTALIAVVITVVFLTLLSVVILIFFYLYKNKGSYVTYEPTEGEPSAIVQMESDLAKGSEKEEYFI</sequence>
<comment type="function">
    <text evidence="3">May play a role in epithelial cell-cell contacts. May play a role in tumor invasiveness and metastasis formation.</text>
</comment>
<comment type="interaction">
    <interactant intactId="EBI-10226799">
        <id>Q0VAQ4</id>
    </interactant>
    <interactant intactId="EBI-2606935">
        <id>Q96BI3</id>
        <label>APH1A</label>
    </interactant>
    <organismsDiffer>false</organismsDiffer>
    <experiments>3</experiments>
</comment>
<comment type="interaction">
    <interactant intactId="EBI-10226799">
        <id>Q0VAQ4</id>
    </interactant>
    <interactant intactId="EBI-13059134">
        <id>Q13520</id>
        <label>AQP6</label>
    </interactant>
    <organismsDiffer>false</organismsDiffer>
    <experiments>3</experiments>
</comment>
<comment type="interaction">
    <interactant intactId="EBI-10226799">
        <id>Q0VAQ4</id>
    </interactant>
    <interactant intactId="EBI-11343438">
        <id>Q3SXY8</id>
        <label>ARL13B</label>
    </interactant>
    <organismsDiffer>false</organismsDiffer>
    <experiments>3</experiments>
</comment>
<comment type="interaction">
    <interactant intactId="EBI-10226799">
        <id>Q0VAQ4</id>
    </interactant>
    <interactant intactId="EBI-1054481">
        <id>P54709</id>
        <label>ATP1B3</label>
    </interactant>
    <organismsDiffer>false</organismsDiffer>
    <experiments>3</experiments>
</comment>
<comment type="interaction">
    <interactant intactId="EBI-10226799">
        <id>Q0VAQ4</id>
    </interactant>
    <interactant intactId="EBI-3943880">
        <id>A8MZ97</id>
        <label>C2orf74</label>
    </interactant>
    <organismsDiffer>false</organismsDiffer>
    <experiments>3</experiments>
</comment>
<comment type="interaction">
    <interactant intactId="EBI-10226799">
        <id>Q0VAQ4</id>
    </interactant>
    <interactant intactId="EBI-6657396">
        <id>P19397</id>
        <label>CD53</label>
    </interactant>
    <organismsDiffer>false</organismsDiffer>
    <experiments>3</experiments>
</comment>
<comment type="interaction">
    <interactant intactId="EBI-10226799">
        <id>Q0VAQ4</id>
    </interactant>
    <interactant intactId="EBI-3915253">
        <id>Q15125</id>
        <label>EBP</label>
    </interactant>
    <organismsDiffer>false</organismsDiffer>
    <experiments>3</experiments>
</comment>
<comment type="interaction">
    <interactant intactId="EBI-10226799">
        <id>Q0VAQ4</id>
    </interactant>
    <interactant intactId="EBI-781551">
        <id>Q9Y282</id>
        <label>ERGIC3</label>
    </interactant>
    <organismsDiffer>false</organismsDiffer>
    <experiments>3</experiments>
</comment>
<comment type="interaction">
    <interactant intactId="EBI-10226799">
        <id>Q0VAQ4</id>
    </interactant>
    <interactant intactId="EBI-2833872">
        <id>O15552</id>
        <label>FFAR2</label>
    </interactant>
    <organismsDiffer>false</organismsDiffer>
    <experiments>3</experiments>
</comment>
<comment type="interaction">
    <interactant intactId="EBI-10226799">
        <id>Q0VAQ4</id>
    </interactant>
    <interactant intactId="EBI-11721746">
        <id>Q8TED1</id>
        <label>GPX8</label>
    </interactant>
    <organismsDiffer>false</organismsDiffer>
    <experiments>3</experiments>
</comment>
<comment type="interaction">
    <interactant intactId="EBI-10226799">
        <id>Q0VAQ4</id>
    </interactant>
    <interactant intactId="EBI-1757512">
        <id>P26951</id>
        <label>IL3RA</label>
    </interactant>
    <organismsDiffer>false</organismsDiffer>
    <experiments>3</experiments>
</comment>
<comment type="interaction">
    <interactant intactId="EBI-10226799">
        <id>Q0VAQ4</id>
    </interactant>
    <interactant intactId="EBI-10266796">
        <id>Q8N5M9</id>
        <label>JAGN1</label>
    </interactant>
    <organismsDiffer>false</organismsDiffer>
    <experiments>3</experiments>
</comment>
<comment type="interaction">
    <interactant intactId="EBI-10226799">
        <id>Q0VAQ4</id>
    </interactant>
    <interactant intactId="EBI-373355">
        <id>Q5SR56</id>
        <label>MFSD14B</label>
    </interactant>
    <organismsDiffer>false</organismsDiffer>
    <experiments>3</experiments>
</comment>
<comment type="interaction">
    <interactant intactId="EBI-10226799">
        <id>Q0VAQ4</id>
    </interactant>
    <interactant intactId="EBI-2624456">
        <id>P41143</id>
        <label>OPRD1</label>
    </interactant>
    <organismsDiffer>false</organismsDiffer>
    <experiments>3</experiments>
</comment>
<comment type="interaction">
    <interactant intactId="EBI-10226799">
        <id>Q0VAQ4</id>
    </interactant>
    <interactant intactId="EBI-12807478">
        <id>P35372-10</id>
        <label>OPRM1</label>
    </interactant>
    <organismsDiffer>false</organismsDiffer>
    <experiments>3</experiments>
</comment>
<comment type="interaction">
    <interactant intactId="EBI-10226799">
        <id>Q0VAQ4</id>
    </interactant>
    <interactant intactId="EBI-17630288">
        <id>P57054</id>
        <label>PIGP</label>
    </interactant>
    <organismsDiffer>false</organismsDiffer>
    <experiments>3</experiments>
</comment>
<comment type="interaction">
    <interactant intactId="EBI-10226799">
        <id>Q0VAQ4</id>
    </interactant>
    <interactant intactId="EBI-11721828">
        <id>Q8IY26</id>
        <label>PLPP6</label>
    </interactant>
    <organismsDiffer>false</organismsDiffer>
    <experiments>3</experiments>
</comment>
<comment type="interaction">
    <interactant intactId="EBI-10226799">
        <id>Q0VAQ4</id>
    </interactant>
    <interactant intactId="EBI-12955265">
        <id>Q96GM1</id>
        <label>PLPPR2</label>
    </interactant>
    <organismsDiffer>false</organismsDiffer>
    <experiments>3</experiments>
</comment>
<comment type="interaction">
    <interactant intactId="EBI-10226799">
        <id>Q0VAQ4</id>
    </interactant>
    <interactant intactId="EBI-7545592">
        <id>Q9H6H4</id>
        <label>REEP4</label>
    </interactant>
    <organismsDiffer>false</organismsDiffer>
    <experiments>3</experiments>
</comment>
<comment type="interaction">
    <interactant intactId="EBI-10226799">
        <id>Q0VAQ4</id>
    </interactant>
    <interactant intactId="EBI-18397230">
        <id>Q6P5S7</id>
        <label>RNASEK</label>
    </interactant>
    <organismsDiffer>false</organismsDiffer>
    <experiments>3</experiments>
</comment>
<comment type="interaction">
    <interactant intactId="EBI-10226799">
        <id>Q0VAQ4</id>
    </interactant>
    <interactant intactId="EBI-347996">
        <id>O43765</id>
        <label>SGTA</label>
    </interactant>
    <organismsDiffer>false</organismsDiffer>
    <experiments>3</experiments>
</comment>
<comment type="interaction">
    <interactant intactId="EBI-10226799">
        <id>Q0VAQ4</id>
    </interactant>
    <interactant intactId="EBI-18159983">
        <id>Q3KNW5</id>
        <label>SLC10A6</label>
    </interactant>
    <organismsDiffer>false</organismsDiffer>
    <experiments>3</experiments>
</comment>
<comment type="interaction">
    <interactant intactId="EBI-10226799">
        <id>Q0VAQ4</id>
    </interactant>
    <interactant intactId="EBI-3921243">
        <id>O60669</id>
        <label>SLC16A7</label>
    </interactant>
    <organismsDiffer>false</organismsDiffer>
    <experiments>3</experiments>
</comment>
<comment type="interaction">
    <interactant intactId="EBI-10226799">
        <id>Q0VAQ4</id>
    </interactant>
    <interactant intactId="EBI-17498703">
        <id>Q9HBV2</id>
        <label>SPACA1</label>
    </interactant>
    <organismsDiffer>false</organismsDiffer>
    <experiments>3</experiments>
</comment>
<comment type="interaction">
    <interactant intactId="EBI-10226799">
        <id>Q0VAQ4</id>
    </interactant>
    <interactant intactId="EBI-18194029">
        <id>Q96L08</id>
        <label>SUSD3</label>
    </interactant>
    <organismsDiffer>false</organismsDiffer>
    <experiments>3</experiments>
</comment>
<comment type="interaction">
    <interactant intactId="EBI-10226799">
        <id>Q0VAQ4</id>
    </interactant>
    <interactant intactId="EBI-12947623">
        <id>Q96MV1</id>
        <label>TLCD4</label>
    </interactant>
    <organismsDiffer>false</organismsDiffer>
    <experiments>3</experiments>
</comment>
<comment type="interaction">
    <interactant intactId="EBI-10226799">
        <id>Q0VAQ4</id>
    </interactant>
    <interactant intactId="EBI-2821497">
        <id>Q9BVX2</id>
        <label>TMEM106C</label>
    </interactant>
    <organismsDiffer>false</organismsDiffer>
    <experiments>3</experiments>
</comment>
<comment type="interaction">
    <interactant intactId="EBI-10226799">
        <id>Q0VAQ4</id>
    </interactant>
    <interactant intactId="EBI-8638294">
        <id>Q9NUH8</id>
        <label>TMEM14B</label>
    </interactant>
    <organismsDiffer>false</organismsDiffer>
    <experiments>3</experiments>
</comment>
<comment type="interaction">
    <interactant intactId="EBI-10226799">
        <id>Q0VAQ4</id>
    </interactant>
    <interactant intactId="EBI-6269551">
        <id>Q6UW68</id>
        <label>TMEM205</label>
    </interactant>
    <organismsDiffer>false</organismsDiffer>
    <experiments>3</experiments>
</comment>
<comment type="interaction">
    <interactant intactId="EBI-10226799">
        <id>Q0VAQ4</id>
    </interactant>
    <interactant intactId="EBI-8642211">
        <id>Q8WY98</id>
        <label>TMEM234</label>
    </interactant>
    <organismsDiffer>false</organismsDiffer>
    <experiments>3</experiments>
</comment>
<comment type="interaction">
    <interactant intactId="EBI-10226799">
        <id>Q0VAQ4</id>
    </interactant>
    <interactant intactId="EBI-3923061">
        <id>Q96B21</id>
        <label>TMEM45B</label>
    </interactant>
    <organismsDiffer>false</organismsDiffer>
    <experiments>3</experiments>
</comment>
<comment type="interaction">
    <interactant intactId="EBI-10226799">
        <id>Q0VAQ4</id>
    </interactant>
    <interactant intactId="EBI-726044">
        <id>Q9NW97</id>
        <label>TMEM51</label>
    </interactant>
    <organismsDiffer>false</organismsDiffer>
    <experiments>3</experiments>
</comment>
<comment type="interaction">
    <interactant intactId="EBI-10226799">
        <id>Q0VAQ4</id>
    </interactant>
    <interactant intactId="EBI-11742770">
        <id>Q96HE8</id>
        <label>TMEM80</label>
    </interactant>
    <organismsDiffer>false</organismsDiffer>
    <experiments>3</experiments>
</comment>
<comment type="interaction">
    <interactant intactId="EBI-10226799">
        <id>Q0VAQ4</id>
    </interactant>
    <interactant intactId="EBI-11724433">
        <id>Q6ZT21</id>
        <label>TMPPE</label>
    </interactant>
    <organismsDiffer>false</organismsDiffer>
    <experiments>3</experiments>
</comment>
<comment type="interaction">
    <interactant intactId="EBI-10226799">
        <id>Q0VAQ4</id>
    </interactant>
    <interactant intactId="EBI-6447886">
        <id>Q9Y320</id>
        <label>TMX2</label>
    </interactant>
    <organismsDiffer>false</organismsDiffer>
    <experiments>3</experiments>
</comment>
<comment type="interaction">
    <interactant intactId="EBI-10226799">
        <id>Q0VAQ4</id>
    </interactant>
    <interactant intactId="EBI-10179682">
        <id>O00526</id>
        <label>UPK2</label>
    </interactant>
    <organismsDiffer>false</organismsDiffer>
    <experiments>3</experiments>
</comment>
<comment type="subcellular location">
    <subcellularLocation>
        <location evidence="2">Cell membrane</location>
        <topology evidence="1">Single-pass type III membrane protein</topology>
    </subcellularLocation>
    <subcellularLocation>
        <location evidence="3">Cytoplasmic vesicle membrane</location>
        <topology evidence="1">Single-pass type III membrane protein</topology>
    </subcellularLocation>
    <text evidence="2 3">Predominantly on lateral parts of the membrane, at cell-cell epithelial junctions (PubMed:15021913). Detected on cytoplasmic membranes in undifferentiated tumors (PubMed:15986429).</text>
</comment>
<comment type="tissue specificity">
    <text evidence="2">Detected in breast, endometrium, colon and biliary tract. Detected in polarized epithelial structures characterized by cell-cell adhesion (at protein level).</text>
</comment>
<comment type="PTM">
    <text evidence="2">O-glycosylated. The O-glycan is modified with sialic acid residues.</text>
</comment>
<comment type="similarity">
    <text evidence="4">Belongs to the SMAGP family.</text>
</comment>
<name>SMAGP_HUMAN</name>
<proteinExistence type="evidence at protein level"/>
<accession>Q0VAQ4</accession>
<accession>A6NIL5</accession>
<reference key="1">
    <citation type="journal article" date="2006" name="Nature">
        <title>The finished DNA sequence of human chromosome 12.</title>
        <authorList>
            <person name="Scherer S.E."/>
            <person name="Muzny D.M."/>
            <person name="Buhay C.J."/>
            <person name="Chen R."/>
            <person name="Cree A."/>
            <person name="Ding Y."/>
            <person name="Dugan-Rocha S."/>
            <person name="Gill R."/>
            <person name="Gunaratne P."/>
            <person name="Harris R.A."/>
            <person name="Hawes A.C."/>
            <person name="Hernandez J."/>
            <person name="Hodgson A.V."/>
            <person name="Hume J."/>
            <person name="Jackson A."/>
            <person name="Khan Z.M."/>
            <person name="Kovar-Smith C."/>
            <person name="Lewis L.R."/>
            <person name="Lozado R.J."/>
            <person name="Metzker M.L."/>
            <person name="Milosavljevic A."/>
            <person name="Miner G.R."/>
            <person name="Montgomery K.T."/>
            <person name="Morgan M.B."/>
            <person name="Nazareth L.V."/>
            <person name="Scott G."/>
            <person name="Sodergren E."/>
            <person name="Song X.-Z."/>
            <person name="Steffen D."/>
            <person name="Lovering R.C."/>
            <person name="Wheeler D.A."/>
            <person name="Worley K.C."/>
            <person name="Yuan Y."/>
            <person name="Zhang Z."/>
            <person name="Adams C.Q."/>
            <person name="Ansari-Lari M.A."/>
            <person name="Ayele M."/>
            <person name="Brown M.J."/>
            <person name="Chen G."/>
            <person name="Chen Z."/>
            <person name="Clerc-Blankenburg K.P."/>
            <person name="Davis C."/>
            <person name="Delgado O."/>
            <person name="Dinh H.H."/>
            <person name="Draper H."/>
            <person name="Gonzalez-Garay M.L."/>
            <person name="Havlak P."/>
            <person name="Jackson L.R."/>
            <person name="Jacob L.S."/>
            <person name="Kelly S.H."/>
            <person name="Li L."/>
            <person name="Li Z."/>
            <person name="Liu J."/>
            <person name="Liu W."/>
            <person name="Lu J."/>
            <person name="Maheshwari M."/>
            <person name="Nguyen B.-V."/>
            <person name="Okwuonu G.O."/>
            <person name="Pasternak S."/>
            <person name="Perez L.M."/>
            <person name="Plopper F.J.H."/>
            <person name="Santibanez J."/>
            <person name="Shen H."/>
            <person name="Tabor P.E."/>
            <person name="Verduzco D."/>
            <person name="Waldron L."/>
            <person name="Wang Q."/>
            <person name="Williams G.A."/>
            <person name="Zhang J."/>
            <person name="Zhou J."/>
            <person name="Allen C.C."/>
            <person name="Amin A.G."/>
            <person name="Anyalebechi V."/>
            <person name="Bailey M."/>
            <person name="Barbaria J.A."/>
            <person name="Bimage K.E."/>
            <person name="Bryant N.P."/>
            <person name="Burch P.E."/>
            <person name="Burkett C.E."/>
            <person name="Burrell K.L."/>
            <person name="Calderon E."/>
            <person name="Cardenas V."/>
            <person name="Carter K."/>
            <person name="Casias K."/>
            <person name="Cavazos I."/>
            <person name="Cavazos S.R."/>
            <person name="Ceasar H."/>
            <person name="Chacko J."/>
            <person name="Chan S.N."/>
            <person name="Chavez D."/>
            <person name="Christopoulos C."/>
            <person name="Chu J."/>
            <person name="Cockrell R."/>
            <person name="Cox C.D."/>
            <person name="Dang M."/>
            <person name="Dathorne S.R."/>
            <person name="David R."/>
            <person name="Davis C.M."/>
            <person name="Davy-Carroll L."/>
            <person name="Deshazo D.R."/>
            <person name="Donlin J.E."/>
            <person name="D'Souza L."/>
            <person name="Eaves K.A."/>
            <person name="Egan A."/>
            <person name="Emery-Cohen A.J."/>
            <person name="Escotto M."/>
            <person name="Flagg N."/>
            <person name="Forbes L.D."/>
            <person name="Gabisi A.M."/>
            <person name="Garza M."/>
            <person name="Hamilton C."/>
            <person name="Henderson N."/>
            <person name="Hernandez O."/>
            <person name="Hines S."/>
            <person name="Hogues M.E."/>
            <person name="Huang M."/>
            <person name="Idlebird D.G."/>
            <person name="Johnson R."/>
            <person name="Jolivet A."/>
            <person name="Jones S."/>
            <person name="Kagan R."/>
            <person name="King L.M."/>
            <person name="Leal B."/>
            <person name="Lebow H."/>
            <person name="Lee S."/>
            <person name="LeVan J.M."/>
            <person name="Lewis L.C."/>
            <person name="London P."/>
            <person name="Lorensuhewa L.M."/>
            <person name="Loulseged H."/>
            <person name="Lovett D.A."/>
            <person name="Lucier A."/>
            <person name="Lucier R.L."/>
            <person name="Ma J."/>
            <person name="Madu R.C."/>
            <person name="Mapua P."/>
            <person name="Martindale A.D."/>
            <person name="Martinez E."/>
            <person name="Massey E."/>
            <person name="Mawhiney S."/>
            <person name="Meador M.G."/>
            <person name="Mendez S."/>
            <person name="Mercado C."/>
            <person name="Mercado I.C."/>
            <person name="Merritt C.E."/>
            <person name="Miner Z.L."/>
            <person name="Minja E."/>
            <person name="Mitchell T."/>
            <person name="Mohabbat F."/>
            <person name="Mohabbat K."/>
            <person name="Montgomery B."/>
            <person name="Moore N."/>
            <person name="Morris S."/>
            <person name="Munidasa M."/>
            <person name="Ngo R.N."/>
            <person name="Nguyen N.B."/>
            <person name="Nickerson E."/>
            <person name="Nwaokelemeh O.O."/>
            <person name="Nwokenkwo S."/>
            <person name="Obregon M."/>
            <person name="Oguh M."/>
            <person name="Oragunye N."/>
            <person name="Oviedo R.J."/>
            <person name="Parish B.J."/>
            <person name="Parker D.N."/>
            <person name="Parrish J."/>
            <person name="Parks K.L."/>
            <person name="Paul H.A."/>
            <person name="Payton B.A."/>
            <person name="Perez A."/>
            <person name="Perrin W."/>
            <person name="Pickens A."/>
            <person name="Primus E.L."/>
            <person name="Pu L.-L."/>
            <person name="Puazo M."/>
            <person name="Quiles M.M."/>
            <person name="Quiroz J.B."/>
            <person name="Rabata D."/>
            <person name="Reeves K."/>
            <person name="Ruiz S.J."/>
            <person name="Shao H."/>
            <person name="Sisson I."/>
            <person name="Sonaike T."/>
            <person name="Sorelle R.P."/>
            <person name="Sutton A.E."/>
            <person name="Svatek A.F."/>
            <person name="Svetz L.A."/>
            <person name="Tamerisa K.S."/>
            <person name="Taylor T.R."/>
            <person name="Teague B."/>
            <person name="Thomas N."/>
            <person name="Thorn R.D."/>
            <person name="Trejos Z.Y."/>
            <person name="Trevino B.K."/>
            <person name="Ukegbu O.N."/>
            <person name="Urban J.B."/>
            <person name="Vasquez L.I."/>
            <person name="Vera V.A."/>
            <person name="Villasana D.M."/>
            <person name="Wang L."/>
            <person name="Ward-Moore S."/>
            <person name="Warren J.T."/>
            <person name="Wei X."/>
            <person name="White F."/>
            <person name="Williamson A.L."/>
            <person name="Wleczyk R."/>
            <person name="Wooden H.S."/>
            <person name="Wooden S.H."/>
            <person name="Yen J."/>
            <person name="Yoon L."/>
            <person name="Yoon V."/>
            <person name="Zorrilla S.E."/>
            <person name="Nelson D."/>
            <person name="Kucherlapati R."/>
            <person name="Weinstock G."/>
            <person name="Gibbs R.A."/>
        </authorList>
    </citation>
    <scope>NUCLEOTIDE SEQUENCE [LARGE SCALE GENOMIC DNA]</scope>
</reference>
<reference key="2">
    <citation type="submission" date="2005-07" db="EMBL/GenBank/DDBJ databases">
        <authorList>
            <person name="Mural R.J."/>
            <person name="Istrail S."/>
            <person name="Sutton G.G."/>
            <person name="Florea L."/>
            <person name="Halpern A.L."/>
            <person name="Mobarry C.M."/>
            <person name="Lippert R."/>
            <person name="Walenz B."/>
            <person name="Shatkay H."/>
            <person name="Dew I."/>
            <person name="Miller J.R."/>
            <person name="Flanigan M.J."/>
            <person name="Edwards N.J."/>
            <person name="Bolanos R."/>
            <person name="Fasulo D."/>
            <person name="Halldorsson B.V."/>
            <person name="Hannenhalli S."/>
            <person name="Turner R."/>
            <person name="Yooseph S."/>
            <person name="Lu F."/>
            <person name="Nusskern D.R."/>
            <person name="Shue B.C."/>
            <person name="Zheng X.H."/>
            <person name="Zhong F."/>
            <person name="Delcher A.L."/>
            <person name="Huson D.H."/>
            <person name="Kravitz S.A."/>
            <person name="Mouchard L."/>
            <person name="Reinert K."/>
            <person name="Remington K.A."/>
            <person name="Clark A.G."/>
            <person name="Waterman M.S."/>
            <person name="Eichler E.E."/>
            <person name="Adams M.D."/>
            <person name="Hunkapiller M.W."/>
            <person name="Myers E.W."/>
            <person name="Venter J.C."/>
        </authorList>
    </citation>
    <scope>NUCLEOTIDE SEQUENCE [LARGE SCALE GENOMIC DNA]</scope>
</reference>
<reference key="3">
    <citation type="journal article" date="2004" name="Genome Res.">
        <title>The status, quality, and expansion of the NIH full-length cDNA project: the Mammalian Gene Collection (MGC).</title>
        <authorList>
            <consortium name="The MGC Project Team"/>
        </authorList>
    </citation>
    <scope>NUCLEOTIDE SEQUENCE [LARGE SCALE MRNA]</scope>
    <source>
        <tissue>Colon</tissue>
    </source>
</reference>
<reference key="4">
    <citation type="journal article" date="2004" name="Oncogene">
        <title>SMAGP, a new small trans-membrane glycoprotein altered in cancer.</title>
        <authorList>
            <person name="Tarbe N.G."/>
            <person name="Rio M.-C."/>
            <person name="Weidle U.H."/>
        </authorList>
    </citation>
    <scope>IDENTIFICATION</scope>
    <scope>SUBCELLULAR LOCATION</scope>
    <scope>TISSUE SPECIFICITY</scope>
    <scope>GLYCOSYLATION</scope>
</reference>
<reference key="5">
    <citation type="journal article" date="2005" name="Int. J. Cancer">
        <title>Overexpression of the small transmembrane and glycosylated protein SMAGP supports metastasis formation of a rat pancreatic adenocarcinoma line.</title>
        <authorList>
            <person name="Tarbe N.G."/>
            <person name="Rio M.-C."/>
            <person name="Hummel S."/>
            <person name="Weidle U.H."/>
            <person name="Zoeller M."/>
        </authorList>
    </citation>
    <scope>SUBCELLULAR LOCATION</scope>
    <scope>FUNCTION</scope>
</reference>
<gene>
    <name type="primary">SMAGP</name>
</gene>
<organism>
    <name type="scientific">Homo sapiens</name>
    <name type="common">Human</name>
    <dbReference type="NCBI Taxonomy" id="9606"/>
    <lineage>
        <taxon>Eukaryota</taxon>
        <taxon>Metazoa</taxon>
        <taxon>Chordata</taxon>
        <taxon>Craniata</taxon>
        <taxon>Vertebrata</taxon>
        <taxon>Euteleostomi</taxon>
        <taxon>Mammalia</taxon>
        <taxon>Eutheria</taxon>
        <taxon>Euarchontoglires</taxon>
        <taxon>Primates</taxon>
        <taxon>Haplorrhini</taxon>
        <taxon>Catarrhini</taxon>
        <taxon>Hominidae</taxon>
        <taxon>Homo</taxon>
    </lineage>
</organism>
<feature type="chain" id="PRO_0000328795" description="Small cell adhesion glycoprotein">
    <location>
        <begin position="1"/>
        <end position="97"/>
    </location>
</feature>
<feature type="topological domain" description="Extracellular" evidence="1">
    <location>
        <begin position="1"/>
        <end position="36"/>
    </location>
</feature>
<feature type="transmembrane region" description="Helical; Signal-anchor for type III membrane protein" evidence="1">
    <location>
        <begin position="37"/>
        <end position="57"/>
    </location>
</feature>
<feature type="topological domain" description="Cytoplasmic" evidence="1">
    <location>
        <begin position="58"/>
        <end position="97"/>
    </location>
</feature>
<feature type="glycosylation site" description="O-linked (GalNAc...) threonine" evidence="1">
    <location>
        <position position="2"/>
    </location>
</feature>
<feature type="glycosylation site" description="O-linked (GalNAc...) serine" evidence="1">
    <location>
        <position position="3"/>
    </location>
</feature>
<feature type="glycosylation site" description="O-linked (GalNAc...) threonine" evidence="1">
    <location>
        <position position="6"/>
    </location>
</feature>
<feature type="glycosylation site" description="O-linked (GalNAc...) threonine" evidence="1">
    <location>
        <position position="7"/>
    </location>
</feature>
<feature type="glycosylation site" description="O-linked (GalNAc...) serine" evidence="1">
    <location>
        <position position="9"/>
    </location>
</feature>
<feature type="glycosylation site" description="O-linked (GalNAc...) threonine" evidence="1">
    <location>
        <position position="16"/>
    </location>
</feature>
<feature type="glycosylation site" description="O-linked (GalNAc...) threonine" evidence="1">
    <location>
        <position position="17"/>
    </location>
</feature>
<feature type="glycosylation site" description="O-linked (GalNAc...) threonine" evidence="1">
    <location>
        <position position="23"/>
    </location>
</feature>
<protein>
    <recommendedName>
        <fullName>Small cell adhesion glycoprotein</fullName>
    </recommendedName>
    <alternativeName>
        <fullName>Small transmembrane and glycosylated protein</fullName>
    </alternativeName>
</protein>
<keyword id="KW-1003">Cell membrane</keyword>
<keyword id="KW-0968">Cytoplasmic vesicle</keyword>
<keyword id="KW-0325">Glycoprotein</keyword>
<keyword id="KW-0472">Membrane</keyword>
<keyword id="KW-1267">Proteomics identification</keyword>
<keyword id="KW-1185">Reference proteome</keyword>
<keyword id="KW-0730">Sialic acid</keyword>
<keyword id="KW-0812">Transmembrane</keyword>
<keyword id="KW-1133">Transmembrane helix</keyword>
<evidence type="ECO:0000255" key="1"/>
<evidence type="ECO:0000269" key="2">
    <source>
    </source>
</evidence>
<evidence type="ECO:0000269" key="3">
    <source>
    </source>
</evidence>
<evidence type="ECO:0000305" key="4"/>
<dbReference type="EMBL" id="AC046135">
    <property type="status" value="NOT_ANNOTATED_CDS"/>
    <property type="molecule type" value="Genomic_DNA"/>
</dbReference>
<dbReference type="EMBL" id="AC139768">
    <property type="status" value="NOT_ANNOTATED_CDS"/>
    <property type="molecule type" value="Genomic_DNA"/>
</dbReference>
<dbReference type="EMBL" id="CH471111">
    <property type="protein sequence ID" value="EAW58184.1"/>
    <property type="molecule type" value="Genomic_DNA"/>
</dbReference>
<dbReference type="EMBL" id="BC008712">
    <property type="protein sequence ID" value="AAH08712.2"/>
    <property type="molecule type" value="mRNA"/>
</dbReference>
<dbReference type="EMBL" id="BC120965">
    <property type="protein sequence ID" value="AAI20966.1"/>
    <property type="molecule type" value="mRNA"/>
</dbReference>
<dbReference type="EMBL" id="BC120966">
    <property type="protein sequence ID" value="AAI20967.1"/>
    <property type="molecule type" value="mRNA"/>
</dbReference>
<dbReference type="CCDS" id="CCDS44889.1"/>
<dbReference type="RefSeq" id="NP_001026798.1">
    <property type="nucleotide sequence ID" value="NM_001031628.2"/>
</dbReference>
<dbReference type="RefSeq" id="NP_001029045.1">
    <property type="nucleotide sequence ID" value="NM_001033873.1"/>
</dbReference>
<dbReference type="SMR" id="Q0VAQ4"/>
<dbReference type="BioGRID" id="121462">
    <property type="interactions" value="41"/>
</dbReference>
<dbReference type="FunCoup" id="Q0VAQ4">
    <property type="interactions" value="73"/>
</dbReference>
<dbReference type="IntAct" id="Q0VAQ4">
    <property type="interactions" value="36"/>
</dbReference>
<dbReference type="STRING" id="9606.ENSP00000475068"/>
<dbReference type="GlyCosmos" id="Q0VAQ4">
    <property type="glycosylation" value="8 sites, No reported glycans"/>
</dbReference>
<dbReference type="GlyGen" id="Q0VAQ4">
    <property type="glycosylation" value="8 sites, 1 O-linked glycan (3 sites)"/>
</dbReference>
<dbReference type="iPTMnet" id="Q0VAQ4"/>
<dbReference type="PhosphoSitePlus" id="Q0VAQ4"/>
<dbReference type="BioMuta" id="SMAGP"/>
<dbReference type="DMDM" id="121940462"/>
<dbReference type="jPOST" id="Q0VAQ4"/>
<dbReference type="MassIVE" id="Q0VAQ4"/>
<dbReference type="PaxDb" id="9606-ENSP00000475068"/>
<dbReference type="PeptideAtlas" id="Q0VAQ4"/>
<dbReference type="ProteomicsDB" id="58808"/>
<dbReference type="Pumba" id="Q0VAQ4"/>
<dbReference type="TopDownProteomics" id="Q0VAQ4"/>
<dbReference type="Antibodypedia" id="42988">
    <property type="antibodies" value="102 antibodies from 22 providers"/>
</dbReference>
<dbReference type="DNASU" id="57228"/>
<dbReference type="Ensembl" id="ENST00000398453.7">
    <property type="protein sequence ID" value="ENSP00000381471.2"/>
    <property type="gene ID" value="ENSG00000170545.17"/>
</dbReference>
<dbReference type="Ensembl" id="ENST00000603798.6">
    <property type="protein sequence ID" value="ENSP00000475068.1"/>
    <property type="gene ID" value="ENSG00000170545.17"/>
</dbReference>
<dbReference type="Ensembl" id="ENST00000603864.5">
    <property type="protein sequence ID" value="ENSP00000474892.1"/>
    <property type="gene ID" value="ENSG00000170545.17"/>
</dbReference>
<dbReference type="GeneID" id="57228"/>
<dbReference type="KEGG" id="hsa:57228"/>
<dbReference type="MANE-Select" id="ENST00000603798.6">
    <property type="protein sequence ID" value="ENSP00000475068.1"/>
    <property type="RefSeq nucleotide sequence ID" value="NM_001031628.2"/>
    <property type="RefSeq protein sequence ID" value="NP_001026798.1"/>
</dbReference>
<dbReference type="UCSC" id="uc001ryd.2">
    <property type="organism name" value="human"/>
</dbReference>
<dbReference type="AGR" id="HGNC:26918"/>
<dbReference type="CTD" id="57228"/>
<dbReference type="DisGeNET" id="57228"/>
<dbReference type="GeneCards" id="SMAGP"/>
<dbReference type="HGNC" id="HGNC:26918">
    <property type="gene designation" value="SMAGP"/>
</dbReference>
<dbReference type="HPA" id="ENSG00000170545">
    <property type="expression patterns" value="Tissue enhanced (esophagus, placenta)"/>
</dbReference>
<dbReference type="neXtProt" id="NX_Q0VAQ4"/>
<dbReference type="OpenTargets" id="ENSG00000170545"/>
<dbReference type="PharmGKB" id="PA165513352"/>
<dbReference type="VEuPathDB" id="HostDB:ENSG00000170545"/>
<dbReference type="eggNOG" id="ENOG502S7EH">
    <property type="taxonomic scope" value="Eukaryota"/>
</dbReference>
<dbReference type="GeneTree" id="ENSGT00390000010077"/>
<dbReference type="InParanoid" id="Q0VAQ4"/>
<dbReference type="OMA" id="QMEDFPH"/>
<dbReference type="OrthoDB" id="9045634at2759"/>
<dbReference type="PAN-GO" id="Q0VAQ4">
    <property type="GO annotations" value="0 GO annotations based on evolutionary models"/>
</dbReference>
<dbReference type="PhylomeDB" id="Q0VAQ4"/>
<dbReference type="TreeFam" id="TF337016"/>
<dbReference type="PathwayCommons" id="Q0VAQ4"/>
<dbReference type="SignaLink" id="Q0VAQ4"/>
<dbReference type="BioGRID-ORCS" id="57228">
    <property type="hits" value="97 hits in 1160 CRISPR screens"/>
</dbReference>
<dbReference type="ChiTaRS" id="SMAGP">
    <property type="organism name" value="human"/>
</dbReference>
<dbReference type="GenomeRNAi" id="57228"/>
<dbReference type="Pharos" id="Q0VAQ4">
    <property type="development level" value="Tbio"/>
</dbReference>
<dbReference type="PRO" id="PR:Q0VAQ4"/>
<dbReference type="Proteomes" id="UP000005640">
    <property type="component" value="Chromosome 12"/>
</dbReference>
<dbReference type="RNAct" id="Q0VAQ4">
    <property type="molecule type" value="protein"/>
</dbReference>
<dbReference type="Bgee" id="ENSG00000170545">
    <property type="expression patterns" value="Expressed in lower esophagus mucosa and 155 other cell types or tissues"/>
</dbReference>
<dbReference type="ExpressionAtlas" id="Q0VAQ4">
    <property type="expression patterns" value="baseline and differential"/>
</dbReference>
<dbReference type="GO" id="GO:0030054">
    <property type="term" value="C:cell junction"/>
    <property type="evidence" value="ECO:0000314"/>
    <property type="project" value="HPA"/>
</dbReference>
<dbReference type="GO" id="GO:0030659">
    <property type="term" value="C:cytoplasmic vesicle membrane"/>
    <property type="evidence" value="ECO:0007669"/>
    <property type="project" value="UniProtKB-SubCell"/>
</dbReference>
<dbReference type="GO" id="GO:0005654">
    <property type="term" value="C:nucleoplasm"/>
    <property type="evidence" value="ECO:0000314"/>
    <property type="project" value="HPA"/>
</dbReference>
<dbReference type="GO" id="GO:0005886">
    <property type="term" value="C:plasma membrane"/>
    <property type="evidence" value="ECO:0000314"/>
    <property type="project" value="HPA"/>
</dbReference>
<dbReference type="InterPro" id="IPR043243">
    <property type="entry name" value="SMAGP"/>
</dbReference>
<dbReference type="PANTHER" id="PTHR47394">
    <property type="entry name" value="SMALL CELL ADHESION GLYCOPROTEIN"/>
    <property type="match status" value="1"/>
</dbReference>
<dbReference type="PANTHER" id="PTHR47394:SF1">
    <property type="entry name" value="SMALL CELL ADHESION GLYCOPROTEIN"/>
    <property type="match status" value="1"/>
</dbReference>